<comment type="subcellular location">
    <subcellularLocation>
        <location evidence="3">Membrane</location>
        <topology evidence="3">Single-pass membrane protein</topology>
    </subcellularLocation>
</comment>
<dbReference type="EMBL" id="Z48716">
    <property type="protein sequence ID" value="CAA88597.2"/>
    <property type="molecule type" value="Genomic_DNA"/>
</dbReference>
<dbReference type="PIR" id="T22977">
    <property type="entry name" value="T22977"/>
</dbReference>
<dbReference type="RefSeq" id="NP_496264.2">
    <property type="nucleotide sequence ID" value="NM_063863.7"/>
</dbReference>
<dbReference type="FunCoup" id="Q09951">
    <property type="interactions" value="171"/>
</dbReference>
<dbReference type="STRING" id="6239.F59B10.3.1"/>
<dbReference type="PaxDb" id="6239-F59B10.3"/>
<dbReference type="PeptideAtlas" id="Q09951"/>
<dbReference type="EnsemblMetazoa" id="F59B10.3.1">
    <property type="protein sequence ID" value="F59B10.3.1"/>
    <property type="gene ID" value="WBGene00010319"/>
</dbReference>
<dbReference type="GeneID" id="174615"/>
<dbReference type="KEGG" id="cel:CELE_F59B10.3"/>
<dbReference type="UCSC" id="F59B10.3">
    <property type="organism name" value="c. elegans"/>
</dbReference>
<dbReference type="AGR" id="WB:WBGene00010319"/>
<dbReference type="CTD" id="174615"/>
<dbReference type="WormBase" id="F59B10.3">
    <property type="protein sequence ID" value="CE35884"/>
    <property type="gene ID" value="WBGene00010319"/>
</dbReference>
<dbReference type="eggNOG" id="ENOG502SVK4">
    <property type="taxonomic scope" value="Eukaryota"/>
</dbReference>
<dbReference type="GeneTree" id="ENSGT00970000196497"/>
<dbReference type="HOGENOM" id="CLU_1579937_0_0_1"/>
<dbReference type="InParanoid" id="Q09951"/>
<dbReference type="OMA" id="CSDGCCK"/>
<dbReference type="OrthoDB" id="5818583at2759"/>
<dbReference type="PhylomeDB" id="Q09951"/>
<dbReference type="PRO" id="PR:Q09951"/>
<dbReference type="Proteomes" id="UP000001940">
    <property type="component" value="Chromosome II"/>
</dbReference>
<dbReference type="Bgee" id="WBGene00010319">
    <property type="expression patterns" value="Expressed in pharyngeal muscle cell (C elegans) and 4 other cell types or tissues"/>
</dbReference>
<dbReference type="GO" id="GO:0016020">
    <property type="term" value="C:membrane"/>
    <property type="evidence" value="ECO:0007669"/>
    <property type="project" value="UniProtKB-SubCell"/>
</dbReference>
<accession>Q09951</accession>
<reference key="1">
    <citation type="journal article" date="1998" name="Science">
        <title>Genome sequence of the nematode C. elegans: a platform for investigating biology.</title>
        <authorList>
            <consortium name="The C. elegans sequencing consortium"/>
        </authorList>
    </citation>
    <scope>NUCLEOTIDE SEQUENCE [LARGE SCALE GENOMIC DNA]</scope>
    <source>
        <strain>Bristol N2</strain>
    </source>
</reference>
<evidence type="ECO:0000255" key="1"/>
<evidence type="ECO:0000256" key="2">
    <source>
        <dbReference type="SAM" id="MobiDB-lite"/>
    </source>
</evidence>
<evidence type="ECO:0000305" key="3"/>
<protein>
    <recommendedName>
        <fullName>Uncharacterized protein F59B10.3</fullName>
    </recommendedName>
</protein>
<organism>
    <name type="scientific">Caenorhabditis elegans</name>
    <dbReference type="NCBI Taxonomy" id="6239"/>
    <lineage>
        <taxon>Eukaryota</taxon>
        <taxon>Metazoa</taxon>
        <taxon>Ecdysozoa</taxon>
        <taxon>Nematoda</taxon>
        <taxon>Chromadorea</taxon>
        <taxon>Rhabditida</taxon>
        <taxon>Rhabditina</taxon>
        <taxon>Rhabditomorpha</taxon>
        <taxon>Rhabditoidea</taxon>
        <taxon>Rhabditidae</taxon>
        <taxon>Peloderinae</taxon>
        <taxon>Caenorhabditis</taxon>
    </lineage>
</organism>
<sequence length="169" mass="19522">MSNSRWDGYQQATQAPGLNRQFDTQTNVLAADSFVRSGLVGQQVNTIDPSFYDCIYGVANSANTVIERCYKDIGCCADGCCKNGYWHNRYGWAVALIVIFCILVIVAFVIWLVVWLFNRSKDKQQKRELYEHYEENNYSGLPTPQPTPTHYPAEQYSYDPARDRDNYRY</sequence>
<feature type="chain" id="PRO_0000065384" description="Uncharacterized protein F59B10.3">
    <location>
        <begin position="1"/>
        <end position="169"/>
    </location>
</feature>
<feature type="transmembrane region" description="Helical" evidence="1">
    <location>
        <begin position="97"/>
        <end position="117"/>
    </location>
</feature>
<feature type="region of interest" description="Disordered" evidence="2">
    <location>
        <begin position="137"/>
        <end position="169"/>
    </location>
</feature>
<feature type="compositionally biased region" description="Basic and acidic residues" evidence="2">
    <location>
        <begin position="160"/>
        <end position="169"/>
    </location>
</feature>
<proteinExistence type="predicted"/>
<gene>
    <name type="ORF">F59B10.3</name>
</gene>
<keyword id="KW-0472">Membrane</keyword>
<keyword id="KW-1185">Reference proteome</keyword>
<keyword id="KW-0812">Transmembrane</keyword>
<keyword id="KW-1133">Transmembrane helix</keyword>
<name>YSR3_CAEEL</name>